<organismHost>
    <name type="scientific">Homo sapiens</name>
    <name type="common">Human</name>
    <dbReference type="NCBI Taxonomy" id="9606"/>
</organismHost>
<organismHost>
    <name type="scientific">Pan troglodytes</name>
    <name type="common">Chimpanzee</name>
    <dbReference type="NCBI Taxonomy" id="9598"/>
</organismHost>
<keyword id="KW-0024">Alternative initiation</keyword>
<keyword id="KW-0167">Capsid protein</keyword>
<keyword id="KW-1176">Cytoplasmic inwards viral transport</keyword>
<keyword id="KW-0238">DNA-binding</keyword>
<keyword id="KW-1035">Host cytoplasm</keyword>
<keyword id="KW-0945">Host-virus interaction</keyword>
<keyword id="KW-1177">Microtubular inwards viral transport</keyword>
<keyword id="KW-0597">Phosphoprotein</keyword>
<keyword id="KW-0677">Repeat</keyword>
<keyword id="KW-0694">RNA-binding</keyword>
<keyword id="KW-1144">T=4 icosahedral capsid protein</keyword>
<keyword id="KW-1163">Viral penetration into host nucleus</keyword>
<keyword id="KW-0946">Virion</keyword>
<keyword id="KW-1160">Virus entry into host cell</keyword>
<gene>
    <name evidence="1" type="primary">C</name>
</gene>
<sequence length="183" mass="21096">MDIDPYKEFGASVELLSFLPSDFFPSIRDLLDTASALYREALESPEHCSPHHTALRQAILCWGELMNLATWVGSNLEDPASRELVVSYVNVNMGLKIRQLLWFHISCLTFGRETVLEYLVSFGVWIRTPPAYRPPNAPILSTLPETTVVRRRGRSPRRRTPSPRRRRSESPRRRRSQSRESQC</sequence>
<reference key="1">
    <citation type="journal article" date="1989" name="Nucleic Acids Res.">
        <title>The nucleotide sequence and reading frames of a mutant hepatitis B virus subtype adr.</title>
        <authorList>
            <person name="Rho H.M."/>
            <person name="Kim K."/>
            <person name="Hyun S.W."/>
            <person name="Kim Y.S."/>
        </authorList>
    </citation>
    <scope>NUCLEOTIDE SEQUENCE [GENOMIC DNA]</scope>
</reference>
<dbReference type="EMBL" id="X14193">
    <property type="status" value="NOT_ANNOTATED_CDS"/>
    <property type="molecule type" value="Genomic_DNA"/>
</dbReference>
<dbReference type="SMR" id="P0C6H6"/>
<dbReference type="Proteomes" id="UP000007924">
    <property type="component" value="Genome"/>
</dbReference>
<dbReference type="GO" id="GO:0043657">
    <property type="term" value="C:host cell"/>
    <property type="evidence" value="ECO:0007669"/>
    <property type="project" value="GOC"/>
</dbReference>
<dbReference type="GO" id="GO:0030430">
    <property type="term" value="C:host cell cytoplasm"/>
    <property type="evidence" value="ECO:0007669"/>
    <property type="project" value="UniProtKB-SubCell"/>
</dbReference>
<dbReference type="GO" id="GO:0039619">
    <property type="term" value="C:T=4 icosahedral viral capsid"/>
    <property type="evidence" value="ECO:0007669"/>
    <property type="project" value="UniProtKB-UniRule"/>
</dbReference>
<dbReference type="GO" id="GO:0003677">
    <property type="term" value="F:DNA binding"/>
    <property type="evidence" value="ECO:0007669"/>
    <property type="project" value="UniProtKB-UniRule"/>
</dbReference>
<dbReference type="GO" id="GO:0003723">
    <property type="term" value="F:RNA binding"/>
    <property type="evidence" value="ECO:0007669"/>
    <property type="project" value="UniProtKB-UniRule"/>
</dbReference>
<dbReference type="GO" id="GO:0005198">
    <property type="term" value="F:structural molecule activity"/>
    <property type="evidence" value="ECO:0007669"/>
    <property type="project" value="UniProtKB-UniRule"/>
</dbReference>
<dbReference type="GO" id="GO:0075521">
    <property type="term" value="P:microtubule-dependent intracellular transport of viral material towards nucleus"/>
    <property type="evidence" value="ECO:0007669"/>
    <property type="project" value="UniProtKB-UniRule"/>
</dbReference>
<dbReference type="GO" id="GO:0046718">
    <property type="term" value="P:symbiont entry into host cell"/>
    <property type="evidence" value="ECO:0007669"/>
    <property type="project" value="UniProtKB-UniRule"/>
</dbReference>
<dbReference type="GO" id="GO:0075732">
    <property type="term" value="P:viral penetration into host nucleus"/>
    <property type="evidence" value="ECO:0007669"/>
    <property type="project" value="UniProtKB-UniRule"/>
</dbReference>
<dbReference type="FunFam" id="1.10.4090.10:FF:000001">
    <property type="entry name" value="Capsid protein"/>
    <property type="match status" value="1"/>
</dbReference>
<dbReference type="Gene3D" id="1.10.4090.10">
    <property type="entry name" value="Viral capsid, core domain supefamily, Hepatitis B virus"/>
    <property type="match status" value="1"/>
</dbReference>
<dbReference type="HAMAP" id="MF_04076">
    <property type="entry name" value="HBV_HBEAG"/>
    <property type="match status" value="1"/>
</dbReference>
<dbReference type="InterPro" id="IPR002006">
    <property type="entry name" value="Hepatitis_core"/>
</dbReference>
<dbReference type="InterPro" id="IPR036459">
    <property type="entry name" value="Viral_capsid_core_dom_sf_HBV"/>
</dbReference>
<dbReference type="Pfam" id="PF00906">
    <property type="entry name" value="Hepatitis_core"/>
    <property type="match status" value="3"/>
</dbReference>
<dbReference type="SUPFAM" id="SSF47852">
    <property type="entry name" value="Hepatitis B viral capsid (hbcag)"/>
    <property type="match status" value="1"/>
</dbReference>
<feature type="chain" id="PRO_0000324365" description="Capsid protein">
    <location>
        <begin position="1"/>
        <end position="183"/>
    </location>
</feature>
<feature type="repeat" description="1; half-length">
    <location>
        <begin position="155"/>
        <end position="160"/>
    </location>
</feature>
<feature type="repeat" description="2">
    <location>
        <begin position="162"/>
        <end position="168"/>
    </location>
</feature>
<feature type="repeat" description="3">
    <location>
        <begin position="170"/>
        <end position="176"/>
    </location>
</feature>
<feature type="region of interest" description="Disordered" evidence="2">
    <location>
        <begin position="136"/>
        <end position="183"/>
    </location>
</feature>
<feature type="region of interest" description="3 X 7 AA repeats of S-P-R-R-R-[PR]-S">
    <location>
        <begin position="155"/>
        <end position="176"/>
    </location>
</feature>
<feature type="region of interest" description="RNA binding" evidence="1">
    <location>
        <begin position="177"/>
        <end position="183"/>
    </location>
</feature>
<feature type="short sequence motif" description="Bipartite nuclear localization signal" evidence="1">
    <location>
        <begin position="158"/>
        <end position="175"/>
    </location>
</feature>
<feature type="compositionally biased region" description="Basic residues" evidence="2">
    <location>
        <begin position="149"/>
        <end position="176"/>
    </location>
</feature>
<feature type="modified residue" description="Phosphoserine; by host" evidence="1">
    <location>
        <position position="155"/>
    </location>
</feature>
<feature type="modified residue" description="Phosphoserine; by host" evidence="1">
    <location>
        <position position="162"/>
    </location>
</feature>
<feature type="modified residue" description="Phosphoserine; by host" evidence="1">
    <location>
        <position position="170"/>
    </location>
</feature>
<evidence type="ECO:0000255" key="1">
    <source>
        <dbReference type="HAMAP-Rule" id="MF_04076"/>
    </source>
</evidence>
<evidence type="ECO:0000256" key="2">
    <source>
        <dbReference type="SAM" id="MobiDB-lite"/>
    </source>
</evidence>
<name>CAPSD_HBVC4</name>
<accession>P0C6H6</accession>
<comment type="function">
    <text evidence="1">Self assembles to form an icosahedral capsid. Most capsids appear to be large particles with an icosahedral symmetry of T=4 and consist of 240 copies of capsid protein, though a fraction forms smaller T=3 particles consisting of 180 capsid proteins. Entering capsids are transported along microtubules to the nucleus. Phosphorylation of the capsid is thought to induce exposure of nuclear localization signal in the C-terminal portion of the capsid protein that allows binding to the nuclear pore complex via the importin (karyopherin-) alpha and beta. Capsids are imported in intact form through the nuclear pore into the nuclear basket, where it probably binds NUP153. Only capsids that contain the mature viral genome can release the viral DNA and capsid protein into the nucleoplasm. Immature capsids get stuck in the basket. Capsids encapsulate the pre-genomic RNA and the P protein. Pre-genomic RNA is reverse-transcribed into DNA while the capsid is still in the cytoplasm. The capsid can then either be directed to the nucleus, providing more genomes for transcription, or bud through the endoplasmic reticulum to provide new virions.</text>
</comment>
<comment type="subunit">
    <text evidence="1">Homodimerizes, then multimerizes. Interacts with cytosol exposed regions of viral L glycoprotein present in the reticulum-to-Golgi compartment. Interacts with human FLNB. Phosphorylated form interacts with host importin alpha; this interaction depends on the exposure of the NLS, which itself depends upon genome maturation and/or phosphorylation of the capsid protein. Interacts with host NUP153.</text>
</comment>
<comment type="subcellular location">
    <subcellularLocation>
        <location evidence="1">Virion</location>
    </subcellularLocation>
    <subcellularLocation>
        <location evidence="1">Host cytoplasm</location>
    </subcellularLocation>
</comment>
<comment type="alternative products">
    <event type="alternative initiation"/>
    <isoform>
        <id>P0C6H6-1</id>
        <name>Capsid protein</name>
        <sequence type="displayed"/>
    </isoform>
    <isoform>
        <id>Q67863-1</id>
        <name>X-Core fused protein</name>
        <sequence type="external"/>
    </isoform>
</comment>
<comment type="PTM">
    <text evidence="1">Phosphorylated by host SRPK1, SRPK2, and maybe protein kinase C or GAPDH. Phosphorylation is critical for pregenomic RNA packaging. Protein kinase C phosphorylation is stimulated by HBx protein and may play a role in transport of the viral genome to the nucleus at the late step during the viral replication cycle.</text>
</comment>
<comment type="similarity">
    <text evidence="1">Belongs to the orthohepadnavirus core antigen family.</text>
</comment>
<protein>
    <recommendedName>
        <fullName evidence="1">Capsid protein</fullName>
    </recommendedName>
    <alternativeName>
        <fullName evidence="1">Core antigen</fullName>
    </alternativeName>
    <alternativeName>
        <fullName evidence="1">Core protein</fullName>
    </alternativeName>
    <alternativeName>
        <fullName evidence="1">HBcAg</fullName>
    </alternativeName>
    <alternativeName>
        <fullName evidence="1">p21.5</fullName>
    </alternativeName>
</protein>
<proteinExistence type="inferred from homology"/>
<organism>
    <name type="scientific">Hepatitis B virus genotype C subtype adr (isolate Korea/Kim/1989)</name>
    <name type="common">HBV-C</name>
    <dbReference type="NCBI Taxonomy" id="31512"/>
    <lineage>
        <taxon>Viruses</taxon>
        <taxon>Riboviria</taxon>
        <taxon>Pararnavirae</taxon>
        <taxon>Artverviricota</taxon>
        <taxon>Revtraviricetes</taxon>
        <taxon>Blubervirales</taxon>
        <taxon>Hepadnaviridae</taxon>
        <taxon>Orthohepadnavirus</taxon>
        <taxon>Hepatitis B virus</taxon>
    </lineage>
</organism>